<proteinExistence type="inferred from homology"/>
<gene>
    <name evidence="1" type="primary">glnD</name>
    <name type="ordered locus">Spro_3792</name>
</gene>
<name>GLND_SERP5</name>
<feature type="chain" id="PRO_1000059226" description="Bifunctional uridylyltransferase/uridylyl-removing enzyme">
    <location>
        <begin position="1"/>
        <end position="892"/>
    </location>
</feature>
<feature type="domain" description="HD" evidence="2">
    <location>
        <begin position="470"/>
        <end position="592"/>
    </location>
</feature>
<feature type="domain" description="ACT 1" evidence="1">
    <location>
        <begin position="711"/>
        <end position="792"/>
    </location>
</feature>
<feature type="domain" description="ACT 2" evidence="1">
    <location>
        <begin position="818"/>
        <end position="892"/>
    </location>
</feature>
<feature type="region of interest" description="Uridylyltransferase">
    <location>
        <begin position="1"/>
        <end position="351"/>
    </location>
</feature>
<feature type="region of interest" description="Uridylyl-removing">
    <location>
        <begin position="352"/>
        <end position="710"/>
    </location>
</feature>
<reference key="1">
    <citation type="submission" date="2007-09" db="EMBL/GenBank/DDBJ databases">
        <title>Complete sequence of chromosome of Serratia proteamaculans 568.</title>
        <authorList>
            <consortium name="US DOE Joint Genome Institute"/>
            <person name="Copeland A."/>
            <person name="Lucas S."/>
            <person name="Lapidus A."/>
            <person name="Barry K."/>
            <person name="Glavina del Rio T."/>
            <person name="Dalin E."/>
            <person name="Tice H."/>
            <person name="Pitluck S."/>
            <person name="Chain P."/>
            <person name="Malfatti S."/>
            <person name="Shin M."/>
            <person name="Vergez L."/>
            <person name="Schmutz J."/>
            <person name="Larimer F."/>
            <person name="Land M."/>
            <person name="Hauser L."/>
            <person name="Kyrpides N."/>
            <person name="Kim E."/>
            <person name="Taghavi S."/>
            <person name="Newman L."/>
            <person name="Vangronsveld J."/>
            <person name="van der Lelie D."/>
            <person name="Richardson P."/>
        </authorList>
    </citation>
    <scope>NUCLEOTIDE SEQUENCE [LARGE SCALE GENOMIC DNA]</scope>
    <source>
        <strain>568</strain>
    </source>
</reference>
<organism>
    <name type="scientific">Serratia proteamaculans (strain 568)</name>
    <dbReference type="NCBI Taxonomy" id="399741"/>
    <lineage>
        <taxon>Bacteria</taxon>
        <taxon>Pseudomonadati</taxon>
        <taxon>Pseudomonadota</taxon>
        <taxon>Gammaproteobacteria</taxon>
        <taxon>Enterobacterales</taxon>
        <taxon>Yersiniaceae</taxon>
        <taxon>Serratia</taxon>
    </lineage>
</organism>
<comment type="function">
    <text evidence="1">Modifies, by uridylylation and deuridylylation, the PII regulatory proteins (GlnB and homologs), in response to the nitrogen status of the cell that GlnD senses through the glutamine level. Under low glutamine levels, catalyzes the conversion of the PII proteins and UTP to PII-UMP and PPi, while under higher glutamine levels, GlnD hydrolyzes PII-UMP to PII and UMP (deuridylylation). Thus, controls uridylylation state and activity of the PII proteins, and plays an important role in the regulation of nitrogen assimilation and metabolism.</text>
</comment>
<comment type="catalytic activity">
    <reaction evidence="1">
        <text>[protein-PII]-L-tyrosine + UTP = [protein-PII]-uridylyl-L-tyrosine + diphosphate</text>
        <dbReference type="Rhea" id="RHEA:13673"/>
        <dbReference type="Rhea" id="RHEA-COMP:12147"/>
        <dbReference type="Rhea" id="RHEA-COMP:12148"/>
        <dbReference type="ChEBI" id="CHEBI:33019"/>
        <dbReference type="ChEBI" id="CHEBI:46398"/>
        <dbReference type="ChEBI" id="CHEBI:46858"/>
        <dbReference type="ChEBI" id="CHEBI:90602"/>
        <dbReference type="EC" id="2.7.7.59"/>
    </reaction>
</comment>
<comment type="catalytic activity">
    <reaction evidence="1">
        <text>[protein-PII]-uridylyl-L-tyrosine + H2O = [protein-PII]-L-tyrosine + UMP + H(+)</text>
        <dbReference type="Rhea" id="RHEA:48600"/>
        <dbReference type="Rhea" id="RHEA-COMP:12147"/>
        <dbReference type="Rhea" id="RHEA-COMP:12148"/>
        <dbReference type="ChEBI" id="CHEBI:15377"/>
        <dbReference type="ChEBI" id="CHEBI:15378"/>
        <dbReference type="ChEBI" id="CHEBI:46858"/>
        <dbReference type="ChEBI" id="CHEBI:57865"/>
        <dbReference type="ChEBI" id="CHEBI:90602"/>
    </reaction>
</comment>
<comment type="cofactor">
    <cofactor evidence="1">
        <name>Mg(2+)</name>
        <dbReference type="ChEBI" id="CHEBI:18420"/>
    </cofactor>
</comment>
<comment type="activity regulation">
    <text evidence="1">Uridylyltransferase (UTase) activity is inhibited by glutamine, while glutamine activates uridylyl-removing (UR) activity.</text>
</comment>
<comment type="domain">
    <text evidence="1">Has four distinct domains: an N-terminal nucleotidyltransferase (NT) domain responsible for UTase activity, a central HD domain that encodes UR activity, and two C-terminal ACT domains that seem to have a role in glutamine sensing.</text>
</comment>
<comment type="similarity">
    <text evidence="1">Belongs to the GlnD family.</text>
</comment>
<dbReference type="EC" id="2.7.7.59" evidence="1"/>
<dbReference type="EC" id="3.1.4.-" evidence="1"/>
<dbReference type="EMBL" id="CP000826">
    <property type="protein sequence ID" value="ABV42888.1"/>
    <property type="molecule type" value="Genomic_DNA"/>
</dbReference>
<dbReference type="SMR" id="A8GIE8"/>
<dbReference type="STRING" id="399741.Spro_3792"/>
<dbReference type="KEGG" id="spe:Spro_3792"/>
<dbReference type="eggNOG" id="COG2844">
    <property type="taxonomic scope" value="Bacteria"/>
</dbReference>
<dbReference type="HOGENOM" id="CLU_012833_0_0_6"/>
<dbReference type="OrthoDB" id="9758038at2"/>
<dbReference type="GO" id="GO:0008773">
    <property type="term" value="F:[protein-PII] uridylyltransferase activity"/>
    <property type="evidence" value="ECO:0007669"/>
    <property type="project" value="UniProtKB-UniRule"/>
</dbReference>
<dbReference type="GO" id="GO:0008081">
    <property type="term" value="F:phosphoric diester hydrolase activity"/>
    <property type="evidence" value="ECO:0007669"/>
    <property type="project" value="UniProtKB-UniRule"/>
</dbReference>
<dbReference type="GO" id="GO:0006808">
    <property type="term" value="P:regulation of nitrogen utilization"/>
    <property type="evidence" value="ECO:0007669"/>
    <property type="project" value="UniProtKB-UniRule"/>
</dbReference>
<dbReference type="CDD" id="cd04899">
    <property type="entry name" value="ACT_ACR-UUR-like_2"/>
    <property type="match status" value="1"/>
</dbReference>
<dbReference type="CDD" id="cd04900">
    <property type="entry name" value="ACT_UUR-like_1"/>
    <property type="match status" value="1"/>
</dbReference>
<dbReference type="CDD" id="cd00077">
    <property type="entry name" value="HDc"/>
    <property type="match status" value="1"/>
</dbReference>
<dbReference type="CDD" id="cd05401">
    <property type="entry name" value="NT_GlnE_GlnD_like"/>
    <property type="match status" value="1"/>
</dbReference>
<dbReference type="FunFam" id="1.10.3210.10:FF:000005">
    <property type="entry name" value="Bifunctional uridylyltransferase/uridylyl-removing enzyme"/>
    <property type="match status" value="1"/>
</dbReference>
<dbReference type="Gene3D" id="1.10.3210.10">
    <property type="entry name" value="Hypothetical protein af1432"/>
    <property type="match status" value="1"/>
</dbReference>
<dbReference type="HAMAP" id="MF_00277">
    <property type="entry name" value="PII_uridylyl_transf"/>
    <property type="match status" value="1"/>
</dbReference>
<dbReference type="InterPro" id="IPR045865">
    <property type="entry name" value="ACT-like_dom_sf"/>
</dbReference>
<dbReference type="InterPro" id="IPR002912">
    <property type="entry name" value="ACT_dom"/>
</dbReference>
<dbReference type="InterPro" id="IPR003607">
    <property type="entry name" value="HD/PDEase_dom"/>
</dbReference>
<dbReference type="InterPro" id="IPR006674">
    <property type="entry name" value="HD_domain"/>
</dbReference>
<dbReference type="InterPro" id="IPR043519">
    <property type="entry name" value="NT_sf"/>
</dbReference>
<dbReference type="InterPro" id="IPR013546">
    <property type="entry name" value="PII_UdlTrfase/GS_AdlTrfase"/>
</dbReference>
<dbReference type="InterPro" id="IPR002934">
    <property type="entry name" value="Polymerase_NTP_transf_dom"/>
</dbReference>
<dbReference type="InterPro" id="IPR010043">
    <property type="entry name" value="UTase/UR"/>
</dbReference>
<dbReference type="NCBIfam" id="NF002487">
    <property type="entry name" value="PRK01759.1"/>
    <property type="match status" value="1"/>
</dbReference>
<dbReference type="NCBIfam" id="NF003448">
    <property type="entry name" value="PRK05007.1"/>
    <property type="match status" value="1"/>
</dbReference>
<dbReference type="NCBIfam" id="TIGR01693">
    <property type="entry name" value="UTase_glnD"/>
    <property type="match status" value="1"/>
</dbReference>
<dbReference type="PANTHER" id="PTHR47320">
    <property type="entry name" value="BIFUNCTIONAL URIDYLYLTRANSFERASE/URIDYLYL-REMOVING ENZYME"/>
    <property type="match status" value="1"/>
</dbReference>
<dbReference type="PANTHER" id="PTHR47320:SF1">
    <property type="entry name" value="BIFUNCTIONAL URIDYLYLTRANSFERASE_URIDYLYL-REMOVING ENZYME"/>
    <property type="match status" value="1"/>
</dbReference>
<dbReference type="Pfam" id="PF01842">
    <property type="entry name" value="ACT"/>
    <property type="match status" value="2"/>
</dbReference>
<dbReference type="Pfam" id="PF08335">
    <property type="entry name" value="GlnD_UR_UTase"/>
    <property type="match status" value="1"/>
</dbReference>
<dbReference type="Pfam" id="PF01966">
    <property type="entry name" value="HD"/>
    <property type="match status" value="1"/>
</dbReference>
<dbReference type="Pfam" id="PF01909">
    <property type="entry name" value="NTP_transf_2"/>
    <property type="match status" value="1"/>
</dbReference>
<dbReference type="PIRSF" id="PIRSF006288">
    <property type="entry name" value="PII_uridyltransf"/>
    <property type="match status" value="1"/>
</dbReference>
<dbReference type="SMART" id="SM00471">
    <property type="entry name" value="HDc"/>
    <property type="match status" value="1"/>
</dbReference>
<dbReference type="SUPFAM" id="SSF55021">
    <property type="entry name" value="ACT-like"/>
    <property type="match status" value="2"/>
</dbReference>
<dbReference type="SUPFAM" id="SSF109604">
    <property type="entry name" value="HD-domain/PDEase-like"/>
    <property type="match status" value="1"/>
</dbReference>
<dbReference type="SUPFAM" id="SSF81301">
    <property type="entry name" value="Nucleotidyltransferase"/>
    <property type="match status" value="1"/>
</dbReference>
<dbReference type="SUPFAM" id="SSF81593">
    <property type="entry name" value="Nucleotidyltransferase substrate binding subunit/domain"/>
    <property type="match status" value="1"/>
</dbReference>
<dbReference type="PROSITE" id="PS51671">
    <property type="entry name" value="ACT"/>
    <property type="match status" value="2"/>
</dbReference>
<dbReference type="PROSITE" id="PS51831">
    <property type="entry name" value="HD"/>
    <property type="match status" value="1"/>
</dbReference>
<keyword id="KW-0378">Hydrolase</keyword>
<keyword id="KW-0460">Magnesium</keyword>
<keyword id="KW-0511">Multifunctional enzyme</keyword>
<keyword id="KW-0548">Nucleotidyltransferase</keyword>
<keyword id="KW-0677">Repeat</keyword>
<keyword id="KW-0808">Transferase</keyword>
<evidence type="ECO:0000255" key="1">
    <source>
        <dbReference type="HAMAP-Rule" id="MF_00277"/>
    </source>
</evidence>
<evidence type="ECO:0000255" key="2">
    <source>
        <dbReference type="PROSITE-ProRule" id="PRU01175"/>
    </source>
</evidence>
<sequence length="892" mass="103200">MSENFRQQDTSVISPQAVPVQPEYPNAYGDEEINCIALKQRLEQFQLWLAAAFNAGSSAESLVAARSDFIDRLLRRLWVFYGFEDIPETALVAVGGYGRGELHPLSDIDVLVLSQRRLNEQQSQRVGEFITLLWDLKLEVGHSVRTLEECLLEGLADLTVATNLIESRMICGDVALFLQMQKHIFSDGFWPSPQFFHAKVVEQQERHQRYHGTSYNLEPDIKSSPGGLRDIHTLLWVARRHFGATSLDEMVGFGFLTQAERNELNECQSFLWRIRFALHLVLPRYDNRLLFDRQLNVAQLLRYEGEGNEPVERMMKDFYRMTRRVGELNHMLLQLFDEAILALDATEKPRPLNDDFQLRGDLIDLRDETLFIRQPESIMRMFYLMVRNREIKGIYSTTVRQLRHARRHLKQPLCTIPEARELFMAILRHPGAVSRALVPMHRHSVLWAYMPQWGKIVGQMQFDLFHAYTVDEHTIRVLQKLESFADAETRPRHPLCVELYPRLPNPELLLLAALFHDIAKGRGGDHSILGAQDVLEFAEVHGLNSREAQLVAWLVRCHLLMSVTAQRRDIQDPTVIQQFSAEVQSETRLRYLVCLTVADICATNETLWNSWKQSLLRELYFATEKQLRRGMQNSPDLRERVRHHRLQALALLRMDNIDEEALHRIWSRCRADYFLRHSPNQLAWHARHLLAHDSTKPLVLVSRQATRGGTEIFIWSPDRPYLFAAVAGEMDRRNLSVHDAQIFTNRDGMAMDTFIVLEPDGSPLAQDRHTAIRHALLQAITQREYQPPRVRRPSSKLRHFSVPTEVSFLPTHTDRRSYLELTALDQPGLLARVGEVFADLNLSLHGARISTIGERVEDLFILADSDRRALNPETRRKLEQRLTEALNPNDKM</sequence>
<accession>A8GIE8</accession>
<protein>
    <recommendedName>
        <fullName evidence="1">Bifunctional uridylyltransferase/uridylyl-removing enzyme</fullName>
        <shortName evidence="1">UTase/UR</shortName>
    </recommendedName>
    <alternativeName>
        <fullName evidence="1">Bifunctional [protein-PII] modification enzyme</fullName>
    </alternativeName>
    <alternativeName>
        <fullName evidence="1">Bifunctional nitrogen sensor protein</fullName>
    </alternativeName>
    <domain>
        <recommendedName>
            <fullName evidence="1">[Protein-PII] uridylyltransferase</fullName>
            <shortName evidence="1">PII uridylyltransferase</shortName>
            <shortName evidence="1">UTase</shortName>
            <ecNumber evidence="1">2.7.7.59</ecNumber>
        </recommendedName>
    </domain>
    <domain>
        <recommendedName>
            <fullName evidence="1">[Protein-PII]-UMP uridylyl-removing enzyme</fullName>
            <shortName evidence="1">UR</shortName>
            <ecNumber evidence="1">3.1.4.-</ecNumber>
        </recommendedName>
    </domain>
</protein>